<reference key="1">
    <citation type="submission" date="2007-06" db="EMBL/GenBank/DDBJ databases">
        <title>Complete sequence of Methanococcus vannielii SB.</title>
        <authorList>
            <consortium name="US DOE Joint Genome Institute"/>
            <person name="Copeland A."/>
            <person name="Lucas S."/>
            <person name="Lapidus A."/>
            <person name="Barry K."/>
            <person name="Glavina del Rio T."/>
            <person name="Dalin E."/>
            <person name="Tice H."/>
            <person name="Pitluck S."/>
            <person name="Chain P."/>
            <person name="Malfatti S."/>
            <person name="Shin M."/>
            <person name="Vergez L."/>
            <person name="Schmutz J."/>
            <person name="Larimer F."/>
            <person name="Land M."/>
            <person name="Hauser L."/>
            <person name="Kyrpides N."/>
            <person name="Anderson I."/>
            <person name="Sieprawska-Lupa M."/>
            <person name="Whitman W.B."/>
            <person name="Richardson P."/>
        </authorList>
    </citation>
    <scope>NUCLEOTIDE SEQUENCE [LARGE SCALE GENOMIC DNA]</scope>
    <source>
        <strain>ATCC 35089 / DSM 1224 / JCM 13029 / OCM 148 / SB</strain>
    </source>
</reference>
<accession>A6US27</accession>
<evidence type="ECO:0000255" key="1">
    <source>
        <dbReference type="HAMAP-Rule" id="MF_00184"/>
    </source>
</evidence>
<sequence length="622" mass="71494">MKTLLIHSDYLEFTAKEKTKIAEDAEILNGKMDECLTVFIAVEKEDESDPVAVIKNAVFEIIKTAGNLNVKNIVVYPYAHLSSDLGSPETAKEILKGIEKELSSSFEVLRAPFGWYKSFKISCKGHPLSELSRKIGTERIEKEKKEKVVSKFYIINGENSELTEVNDELLSKLKDKGLLALLKHELDIKEEGKENGEPPHVKYIKEKEICDYEPSSDAGHFRWYPKGKLIRDLLSDYVYNLVVENGGMPVETPVMYDLQNNAIREHADKFGERQYRFRQGNKDLMLRFAACFGQFMMKKDMYLLPKHLPLKLYELSTYSFRYEQRGELVGLKRLRGFTMPDMHTVCIDMNQAMEAFENQFWMGLKTGDDFKTPYSIIFRFTNEFFEENKEWFFKMAKEYKLKYGKDAILEILPGRKHYWVGKVDMAVVDSFGRPIENPTVQIDVESAQRFGITVHDGDKTIHPIILHCSPTGSIERVLCGLLENAYIKTLEDKPPALPTWLTPIQARVIPVSERNEEFALEVVNKLRESGIRTDFDDREDSMGKKIRNAGTDWVNYVVVIGDNEMESKKLTVTLREESSIKQPKKESLTVGELIEKVTSEIKGSPNRPLPLPMKCSVQPIFR</sequence>
<comment type="function">
    <text evidence="1">Catalyzes the attachment of threonine to tRNA(Thr) in a two-step reaction: L-threonine is first activated by ATP to form Thr-AMP and then transferred to the acceptor end of tRNA(Thr). Also edits incorrectly charged L-seryl-tRNA(Thr).</text>
</comment>
<comment type="catalytic activity">
    <reaction evidence="1">
        <text>tRNA(Thr) + L-threonine + ATP = L-threonyl-tRNA(Thr) + AMP + diphosphate + H(+)</text>
        <dbReference type="Rhea" id="RHEA:24624"/>
        <dbReference type="Rhea" id="RHEA-COMP:9670"/>
        <dbReference type="Rhea" id="RHEA-COMP:9704"/>
        <dbReference type="ChEBI" id="CHEBI:15378"/>
        <dbReference type="ChEBI" id="CHEBI:30616"/>
        <dbReference type="ChEBI" id="CHEBI:33019"/>
        <dbReference type="ChEBI" id="CHEBI:57926"/>
        <dbReference type="ChEBI" id="CHEBI:78442"/>
        <dbReference type="ChEBI" id="CHEBI:78534"/>
        <dbReference type="ChEBI" id="CHEBI:456215"/>
        <dbReference type="EC" id="6.1.1.3"/>
    </reaction>
</comment>
<comment type="cofactor">
    <cofactor evidence="1">
        <name>Zn(2+)</name>
        <dbReference type="ChEBI" id="CHEBI:29105"/>
    </cofactor>
    <text evidence="1">Binds 1 zinc ion per subunit.</text>
</comment>
<comment type="subunit">
    <text evidence="1">Homodimer.</text>
</comment>
<comment type="subcellular location">
    <subcellularLocation>
        <location evidence="1">Cytoplasm</location>
    </subcellularLocation>
</comment>
<comment type="domain">
    <text evidence="1">The N-terminal domain is an archaea-specific tRNA-editing domain that hydrolyzes incorrectly charged L-seryl-tRNA(Thr). Catalysis of tRNA editing is performed by the charged tRNA itself.</text>
</comment>
<comment type="similarity">
    <text evidence="1">Belongs to the class-II aminoacyl-tRNA synthetase family.</text>
</comment>
<proteinExistence type="inferred from homology"/>
<gene>
    <name evidence="1" type="primary">thrS</name>
    <name type="ordered locus">Mevan_1403</name>
</gene>
<name>SYT_METVS</name>
<organism>
    <name type="scientific">Methanococcus vannielii (strain ATCC 35089 / DSM 1224 / JCM 13029 / OCM 148 / SB)</name>
    <dbReference type="NCBI Taxonomy" id="406327"/>
    <lineage>
        <taxon>Archaea</taxon>
        <taxon>Methanobacteriati</taxon>
        <taxon>Methanobacteriota</taxon>
        <taxon>Methanomada group</taxon>
        <taxon>Methanococci</taxon>
        <taxon>Methanococcales</taxon>
        <taxon>Methanococcaceae</taxon>
        <taxon>Methanococcus</taxon>
    </lineage>
</organism>
<dbReference type="EC" id="6.1.1.3" evidence="1"/>
<dbReference type="EMBL" id="CP000742">
    <property type="protein sequence ID" value="ABR55299.1"/>
    <property type="molecule type" value="Genomic_DNA"/>
</dbReference>
<dbReference type="RefSeq" id="WP_012066213.1">
    <property type="nucleotide sequence ID" value="NC_009634.1"/>
</dbReference>
<dbReference type="SMR" id="A6US27"/>
<dbReference type="STRING" id="406327.Mevan_1403"/>
<dbReference type="GeneID" id="5325134"/>
<dbReference type="KEGG" id="mvn:Mevan_1403"/>
<dbReference type="eggNOG" id="arCOG00401">
    <property type="taxonomic scope" value="Archaea"/>
</dbReference>
<dbReference type="HOGENOM" id="CLU_029833_0_0_2"/>
<dbReference type="OrthoDB" id="372136at2157"/>
<dbReference type="Proteomes" id="UP000001107">
    <property type="component" value="Chromosome"/>
</dbReference>
<dbReference type="GO" id="GO:0005737">
    <property type="term" value="C:cytoplasm"/>
    <property type="evidence" value="ECO:0007669"/>
    <property type="project" value="UniProtKB-SubCell"/>
</dbReference>
<dbReference type="GO" id="GO:0005524">
    <property type="term" value="F:ATP binding"/>
    <property type="evidence" value="ECO:0007669"/>
    <property type="project" value="UniProtKB-UniRule"/>
</dbReference>
<dbReference type="GO" id="GO:0004829">
    <property type="term" value="F:threonine-tRNA ligase activity"/>
    <property type="evidence" value="ECO:0007669"/>
    <property type="project" value="UniProtKB-UniRule"/>
</dbReference>
<dbReference type="GO" id="GO:0000049">
    <property type="term" value="F:tRNA binding"/>
    <property type="evidence" value="ECO:0007669"/>
    <property type="project" value="UniProtKB-KW"/>
</dbReference>
<dbReference type="GO" id="GO:0008270">
    <property type="term" value="F:zinc ion binding"/>
    <property type="evidence" value="ECO:0007669"/>
    <property type="project" value="InterPro"/>
</dbReference>
<dbReference type="GO" id="GO:0006435">
    <property type="term" value="P:threonyl-tRNA aminoacylation"/>
    <property type="evidence" value="ECO:0007669"/>
    <property type="project" value="UniProtKB-UniRule"/>
</dbReference>
<dbReference type="CDD" id="cd00860">
    <property type="entry name" value="ThrRS_anticodon"/>
    <property type="match status" value="1"/>
</dbReference>
<dbReference type="FunFam" id="3.40.50.800:FF:000001">
    <property type="entry name" value="Threonine--tRNA ligase"/>
    <property type="match status" value="1"/>
</dbReference>
<dbReference type="FunFam" id="3.50.80.10:FF:000004">
    <property type="entry name" value="Threonine--tRNA ligase"/>
    <property type="match status" value="1"/>
</dbReference>
<dbReference type="Gene3D" id="3.40.50.800">
    <property type="entry name" value="Anticodon-binding domain"/>
    <property type="match status" value="1"/>
</dbReference>
<dbReference type="Gene3D" id="3.30.930.10">
    <property type="entry name" value="Bira Bifunctional Protein, Domain 2"/>
    <property type="match status" value="1"/>
</dbReference>
<dbReference type="Gene3D" id="3.50.80.10">
    <property type="entry name" value="D-tyrosyl-tRNA(Tyr) deacylase"/>
    <property type="match status" value="1"/>
</dbReference>
<dbReference type="HAMAP" id="MF_00184">
    <property type="entry name" value="Thr_tRNA_synth"/>
    <property type="match status" value="1"/>
</dbReference>
<dbReference type="InterPro" id="IPR002314">
    <property type="entry name" value="aa-tRNA-synt_IIb"/>
</dbReference>
<dbReference type="InterPro" id="IPR006195">
    <property type="entry name" value="aa-tRNA-synth_II"/>
</dbReference>
<dbReference type="InterPro" id="IPR045864">
    <property type="entry name" value="aa-tRNA-synth_II/BPL/LPL"/>
</dbReference>
<dbReference type="InterPro" id="IPR004154">
    <property type="entry name" value="Anticodon-bd"/>
</dbReference>
<dbReference type="InterPro" id="IPR036621">
    <property type="entry name" value="Anticodon-bd_dom_sf"/>
</dbReference>
<dbReference type="InterPro" id="IPR023509">
    <property type="entry name" value="DTD-like_sf"/>
</dbReference>
<dbReference type="InterPro" id="IPR002320">
    <property type="entry name" value="Thr-tRNA-ligase_IIa"/>
</dbReference>
<dbReference type="InterPro" id="IPR015011">
    <property type="entry name" value="Threonyl-tRNA_syn_edit_dom_arc"/>
</dbReference>
<dbReference type="InterPro" id="IPR047246">
    <property type="entry name" value="ThrRS_anticodon"/>
</dbReference>
<dbReference type="NCBIfam" id="NF003068">
    <property type="entry name" value="PRK03991.1"/>
    <property type="match status" value="1"/>
</dbReference>
<dbReference type="NCBIfam" id="TIGR00418">
    <property type="entry name" value="thrS"/>
    <property type="match status" value="1"/>
</dbReference>
<dbReference type="PANTHER" id="PTHR11451:SF44">
    <property type="entry name" value="THREONINE--TRNA LIGASE, CHLOROPLASTIC_MITOCHONDRIAL 2"/>
    <property type="match status" value="1"/>
</dbReference>
<dbReference type="PANTHER" id="PTHR11451">
    <property type="entry name" value="THREONINE-TRNA LIGASE"/>
    <property type="match status" value="1"/>
</dbReference>
<dbReference type="Pfam" id="PF03129">
    <property type="entry name" value="HGTP_anticodon"/>
    <property type="match status" value="1"/>
</dbReference>
<dbReference type="Pfam" id="PF00587">
    <property type="entry name" value="tRNA-synt_2b"/>
    <property type="match status" value="1"/>
</dbReference>
<dbReference type="Pfam" id="PF08915">
    <property type="entry name" value="tRNA-Thr_ED"/>
    <property type="match status" value="1"/>
</dbReference>
<dbReference type="PRINTS" id="PR01047">
    <property type="entry name" value="TRNASYNTHTHR"/>
</dbReference>
<dbReference type="SUPFAM" id="SSF52954">
    <property type="entry name" value="Class II aaRS ABD-related"/>
    <property type="match status" value="1"/>
</dbReference>
<dbReference type="SUPFAM" id="SSF55681">
    <property type="entry name" value="Class II aaRS and biotin synthetases"/>
    <property type="match status" value="1"/>
</dbReference>
<dbReference type="PROSITE" id="PS50862">
    <property type="entry name" value="AA_TRNA_LIGASE_II"/>
    <property type="match status" value="1"/>
</dbReference>
<keyword id="KW-0030">Aminoacyl-tRNA synthetase</keyword>
<keyword id="KW-0067">ATP-binding</keyword>
<keyword id="KW-0963">Cytoplasm</keyword>
<keyword id="KW-0436">Ligase</keyword>
<keyword id="KW-0479">Metal-binding</keyword>
<keyword id="KW-0547">Nucleotide-binding</keyword>
<keyword id="KW-0648">Protein biosynthesis</keyword>
<keyword id="KW-0694">RNA-binding</keyword>
<keyword id="KW-0820">tRNA-binding</keyword>
<keyword id="KW-0862">Zinc</keyword>
<feature type="chain" id="PRO_1000020437" description="Threonine--tRNA ligase">
    <location>
        <begin position="1"/>
        <end position="622"/>
    </location>
</feature>
<feature type="region of interest" description="Editing domain" evidence="1">
    <location>
        <begin position="1"/>
        <end position="134"/>
    </location>
</feature>
<feature type="region of interest" description="Catalytic" evidence="1">
    <location>
        <begin position="199"/>
        <end position="498"/>
    </location>
</feature>
<feature type="binding site" evidence="1">
    <location>
        <position position="291"/>
    </location>
    <ligand>
        <name>Zn(2+)</name>
        <dbReference type="ChEBI" id="CHEBI:29105"/>
    </ligand>
</feature>
<feature type="binding site" evidence="1">
    <location>
        <position position="343"/>
    </location>
    <ligand>
        <name>Zn(2+)</name>
        <dbReference type="ChEBI" id="CHEBI:29105"/>
    </ligand>
</feature>
<feature type="binding site" evidence="1">
    <location>
        <position position="467"/>
    </location>
    <ligand>
        <name>Zn(2+)</name>
        <dbReference type="ChEBI" id="CHEBI:29105"/>
    </ligand>
</feature>
<protein>
    <recommendedName>
        <fullName evidence="1">Threonine--tRNA ligase</fullName>
        <ecNumber evidence="1">6.1.1.3</ecNumber>
    </recommendedName>
    <alternativeName>
        <fullName evidence="1">Threonyl-tRNA synthetase</fullName>
        <shortName evidence="1">ThrRS</shortName>
    </alternativeName>
</protein>